<dbReference type="EMBL" id="AL939124">
    <property type="protein sequence ID" value="CAA22414.1"/>
    <property type="molecule type" value="Genomic_DNA"/>
</dbReference>
<dbReference type="PIR" id="T35655">
    <property type="entry name" value="T35655"/>
</dbReference>
<dbReference type="RefSeq" id="NP_629706.1">
    <property type="nucleotide sequence ID" value="NC_003888.3"/>
</dbReference>
<dbReference type="RefSeq" id="WP_006139588.1">
    <property type="nucleotide sequence ID" value="NZ_VNID01000011.1"/>
</dbReference>
<dbReference type="SMR" id="Q9ZBQ8"/>
<dbReference type="STRING" id="100226.gene:17763229"/>
<dbReference type="PaxDb" id="100226-SCO5571"/>
<dbReference type="GeneID" id="97462056"/>
<dbReference type="KEGG" id="sco:SCO5571"/>
<dbReference type="PATRIC" id="fig|100226.15.peg.5660"/>
<dbReference type="eggNOG" id="COG0333">
    <property type="taxonomic scope" value="Bacteria"/>
</dbReference>
<dbReference type="HOGENOM" id="CLU_129084_1_1_11"/>
<dbReference type="InParanoid" id="Q9ZBQ8"/>
<dbReference type="OrthoDB" id="9807363at2"/>
<dbReference type="PhylomeDB" id="Q9ZBQ8"/>
<dbReference type="PRO" id="PR:Q9ZBQ8"/>
<dbReference type="Proteomes" id="UP000001973">
    <property type="component" value="Chromosome"/>
</dbReference>
<dbReference type="GO" id="GO:0015934">
    <property type="term" value="C:large ribosomal subunit"/>
    <property type="evidence" value="ECO:0007669"/>
    <property type="project" value="InterPro"/>
</dbReference>
<dbReference type="GO" id="GO:0003735">
    <property type="term" value="F:structural constituent of ribosome"/>
    <property type="evidence" value="ECO:0000318"/>
    <property type="project" value="GO_Central"/>
</dbReference>
<dbReference type="GO" id="GO:0006412">
    <property type="term" value="P:translation"/>
    <property type="evidence" value="ECO:0007669"/>
    <property type="project" value="UniProtKB-UniRule"/>
</dbReference>
<dbReference type="HAMAP" id="MF_00340">
    <property type="entry name" value="Ribosomal_bL32"/>
    <property type="match status" value="1"/>
</dbReference>
<dbReference type="InterPro" id="IPR002677">
    <property type="entry name" value="Ribosomal_bL32"/>
</dbReference>
<dbReference type="InterPro" id="IPR044957">
    <property type="entry name" value="Ribosomal_bL32_bact"/>
</dbReference>
<dbReference type="InterPro" id="IPR011332">
    <property type="entry name" value="Ribosomal_zn-bd"/>
</dbReference>
<dbReference type="NCBIfam" id="TIGR01031">
    <property type="entry name" value="rpmF_bact"/>
    <property type="match status" value="1"/>
</dbReference>
<dbReference type="PANTHER" id="PTHR35534">
    <property type="entry name" value="50S RIBOSOMAL PROTEIN L32"/>
    <property type="match status" value="1"/>
</dbReference>
<dbReference type="PANTHER" id="PTHR35534:SF1">
    <property type="entry name" value="LARGE RIBOSOMAL SUBUNIT PROTEIN BL32"/>
    <property type="match status" value="1"/>
</dbReference>
<dbReference type="Pfam" id="PF01783">
    <property type="entry name" value="Ribosomal_L32p"/>
    <property type="match status" value="1"/>
</dbReference>
<dbReference type="SUPFAM" id="SSF57829">
    <property type="entry name" value="Zn-binding ribosomal proteins"/>
    <property type="match status" value="1"/>
</dbReference>
<reference key="1">
    <citation type="journal article" date="2002" name="Nature">
        <title>Complete genome sequence of the model actinomycete Streptomyces coelicolor A3(2).</title>
        <authorList>
            <person name="Bentley S.D."/>
            <person name="Chater K.F."/>
            <person name="Cerdeno-Tarraga A.-M."/>
            <person name="Challis G.L."/>
            <person name="Thomson N.R."/>
            <person name="James K.D."/>
            <person name="Harris D.E."/>
            <person name="Quail M.A."/>
            <person name="Kieser H."/>
            <person name="Harper D."/>
            <person name="Bateman A."/>
            <person name="Brown S."/>
            <person name="Chandra G."/>
            <person name="Chen C.W."/>
            <person name="Collins M."/>
            <person name="Cronin A."/>
            <person name="Fraser A."/>
            <person name="Goble A."/>
            <person name="Hidalgo J."/>
            <person name="Hornsby T."/>
            <person name="Howarth S."/>
            <person name="Huang C.-H."/>
            <person name="Kieser T."/>
            <person name="Larke L."/>
            <person name="Murphy L.D."/>
            <person name="Oliver K."/>
            <person name="O'Neil S."/>
            <person name="Rabbinowitsch E."/>
            <person name="Rajandream M.A."/>
            <person name="Rutherford K.M."/>
            <person name="Rutter S."/>
            <person name="Seeger K."/>
            <person name="Saunders D."/>
            <person name="Sharp S."/>
            <person name="Squares R."/>
            <person name="Squares S."/>
            <person name="Taylor K."/>
            <person name="Warren T."/>
            <person name="Wietzorrek A."/>
            <person name="Woodward J.R."/>
            <person name="Barrell B.G."/>
            <person name="Parkhill J."/>
            <person name="Hopwood D.A."/>
        </authorList>
    </citation>
    <scope>NUCLEOTIDE SEQUENCE [LARGE SCALE GENOMIC DNA]</scope>
    <source>
        <strain>ATCC BAA-471 / A3(2) / M145</strain>
    </source>
</reference>
<feature type="chain" id="PRO_0000172412" description="Large ribosomal subunit protein bL32A">
    <location>
        <begin position="1"/>
        <end position="57"/>
    </location>
</feature>
<name>RL321_STRCO</name>
<comment type="similarity">
    <text evidence="2">Belongs to the bacterial ribosomal protein bL32 family.</text>
</comment>
<keyword id="KW-1185">Reference proteome</keyword>
<keyword id="KW-0687">Ribonucleoprotein</keyword>
<keyword id="KW-0689">Ribosomal protein</keyword>
<protein>
    <recommendedName>
        <fullName evidence="1">Large ribosomal subunit protein bL32A</fullName>
    </recommendedName>
    <alternativeName>
        <fullName evidence="2">50S ribosomal protein L32 1</fullName>
    </alternativeName>
</protein>
<sequence length="57" mass="6573">MAVPKRKMSRSNTRHRRSQWKAAVPTLVACERCHEPKLQHIACPACGTYNKRQVLEV</sequence>
<proteinExistence type="inferred from homology"/>
<gene>
    <name type="primary">rpmF1</name>
    <name type="synonym">rpmF</name>
    <name type="ordered locus">SCO5571</name>
    <name type="ORF">SC7A1.15</name>
</gene>
<accession>Q9ZBQ8</accession>
<evidence type="ECO:0000255" key="1">
    <source>
        <dbReference type="HAMAP-Rule" id="MF_00340"/>
    </source>
</evidence>
<evidence type="ECO:0000305" key="2"/>
<organism>
    <name type="scientific">Streptomyces coelicolor (strain ATCC BAA-471 / A3(2) / M145)</name>
    <dbReference type="NCBI Taxonomy" id="100226"/>
    <lineage>
        <taxon>Bacteria</taxon>
        <taxon>Bacillati</taxon>
        <taxon>Actinomycetota</taxon>
        <taxon>Actinomycetes</taxon>
        <taxon>Kitasatosporales</taxon>
        <taxon>Streptomycetaceae</taxon>
        <taxon>Streptomyces</taxon>
        <taxon>Streptomyces albidoflavus group</taxon>
    </lineage>
</organism>